<keyword id="KW-0044">Antibiotic</keyword>
<keyword id="KW-0929">Antimicrobial</keyword>
<keyword id="KW-0165">Cleavage on pair of basic residues</keyword>
<keyword id="KW-0903">Direct protein sequencing</keyword>
<keyword id="KW-0391">Immunity</keyword>
<keyword id="KW-0399">Innate immunity</keyword>
<keyword id="KW-0964">Secreted</keyword>
<keyword id="KW-0732">Signal</keyword>
<sequence>MMKLVIALCLIGISAAYVVPVYYEIYPEDATFDEADIEPQLSPAELHHGSIRERRSLQPGAPSFPMPGSQLPTSVSGNVEKQGRNTIATIDAQHKTDRYDVRGTWTKVVDGPGRSKPNFRIGGSYRW</sequence>
<proteinExistence type="evidence at protein level"/>
<organism>
    <name type="scientific">Holotrichia diomphalia</name>
    <name type="common">Korean black chafer</name>
    <dbReference type="NCBI Taxonomy" id="33394"/>
    <lineage>
        <taxon>Eukaryota</taxon>
        <taxon>Metazoa</taxon>
        <taxon>Ecdysozoa</taxon>
        <taxon>Arthropoda</taxon>
        <taxon>Hexapoda</taxon>
        <taxon>Insecta</taxon>
        <taxon>Pterygota</taxon>
        <taxon>Neoptera</taxon>
        <taxon>Endopterygota</taxon>
        <taxon>Coleoptera</taxon>
        <taxon>Polyphaga</taxon>
        <taxon>Scarabaeiformia</taxon>
        <taxon>Scarabaeidae</taxon>
        <taxon>Melolonthinae</taxon>
        <taxon>Holotrichia</taxon>
    </lineage>
</organism>
<accession>Q25054</accession>
<evidence type="ECO:0000255" key="1"/>
<evidence type="ECO:0000256" key="2">
    <source>
        <dbReference type="SAM" id="MobiDB-lite"/>
    </source>
</evidence>
<evidence type="ECO:0000269" key="3">
    <source>
    </source>
</evidence>
<evidence type="ECO:0000305" key="4"/>
<reference key="1">
    <citation type="journal article" date="1994" name="J. Biochem.">
        <title>Purification and molecular cloning of cDNA for an inducible antibacterial protein of larvae of a coleopteran insect, Holotrichia diomphalia.</title>
        <authorList>
            <person name="Lee S.Y."/>
            <person name="Moon H.J."/>
            <person name="Kurata S."/>
            <person name="Kurama T."/>
            <person name="Natori S."/>
            <person name="Lee B.L."/>
        </authorList>
    </citation>
    <scope>NUCLEOTIDE SEQUENCE [MRNA]</scope>
    <scope>PROTEIN SEQUENCE OF 56-75 AND 82-126</scope>
    <source>
        <tissue>Larval hemolymph</tissue>
    </source>
</reference>
<name>HOL2_HOLDI</name>
<feature type="signal peptide" evidence="1">
    <location>
        <begin position="1"/>
        <end position="15"/>
    </location>
</feature>
<feature type="propeptide" id="PRO_0000004986" evidence="3">
    <location>
        <begin position="16"/>
        <end position="55"/>
    </location>
</feature>
<feature type="chain" id="PRO_0000004987" description="Holotricin-2">
    <location>
        <begin position="56"/>
        <end position="127"/>
    </location>
</feature>
<feature type="region of interest" description="Disordered" evidence="2">
    <location>
        <begin position="43"/>
        <end position="84"/>
    </location>
</feature>
<feature type="compositionally biased region" description="Basic and acidic residues" evidence="2">
    <location>
        <begin position="45"/>
        <end position="56"/>
    </location>
</feature>
<feature type="compositionally biased region" description="Polar residues" evidence="2">
    <location>
        <begin position="70"/>
        <end position="84"/>
    </location>
</feature>
<dbReference type="EMBL" id="D13745">
    <property type="protein sequence ID" value="BAA02890.1"/>
    <property type="molecule type" value="mRNA"/>
</dbReference>
<dbReference type="SMR" id="Q25054"/>
<dbReference type="GO" id="GO:0005576">
    <property type="term" value="C:extracellular region"/>
    <property type="evidence" value="ECO:0007669"/>
    <property type="project" value="UniProtKB-SubCell"/>
</dbReference>
<dbReference type="GO" id="GO:0042742">
    <property type="term" value="P:defense response to bacterium"/>
    <property type="evidence" value="ECO:0007669"/>
    <property type="project" value="UniProtKB-KW"/>
</dbReference>
<dbReference type="GO" id="GO:0045087">
    <property type="term" value="P:innate immune response"/>
    <property type="evidence" value="ECO:0007669"/>
    <property type="project" value="UniProtKB-KW"/>
</dbReference>
<dbReference type="InterPro" id="IPR009382">
    <property type="entry name" value="Coleoptericin"/>
</dbReference>
<dbReference type="Pfam" id="PF06286">
    <property type="entry name" value="Coleoptericin"/>
    <property type="match status" value="1"/>
</dbReference>
<comment type="function">
    <text>Antibacterial activity against Gram-negative bacteria but not against Gram-positive bacteria.</text>
</comment>
<comment type="subcellular location">
    <subcellularLocation>
        <location>Secreted</location>
    </subcellularLocation>
</comment>
<comment type="tissue specificity">
    <text>Hemolymph.</text>
</comment>
<comment type="similarity">
    <text evidence="4">Belongs to the coleoptericin family.</text>
</comment>
<protein>
    <recommendedName>
        <fullName>Holotricin-2</fullName>
    </recommendedName>
</protein>